<protein>
    <recommendedName>
        <fullName evidence="1">UPF0225 protein YchJ</fullName>
    </recommendedName>
</protein>
<name>YCHJ_SALPA</name>
<dbReference type="EMBL" id="CP000026">
    <property type="protein sequence ID" value="AAV77084.1"/>
    <property type="molecule type" value="Genomic_DNA"/>
</dbReference>
<dbReference type="RefSeq" id="WP_001540172.1">
    <property type="nucleotide sequence ID" value="NC_006511.1"/>
</dbReference>
<dbReference type="SMR" id="Q5PI88"/>
<dbReference type="KEGG" id="spt:SPA1123"/>
<dbReference type="HOGENOM" id="CLU_099590_0_0_6"/>
<dbReference type="Proteomes" id="UP000008185">
    <property type="component" value="Chromosome"/>
</dbReference>
<dbReference type="Gene3D" id="3.10.450.50">
    <property type="match status" value="1"/>
</dbReference>
<dbReference type="HAMAP" id="MF_00612">
    <property type="entry name" value="UPF0225"/>
    <property type="match status" value="1"/>
</dbReference>
<dbReference type="InterPro" id="IPR032710">
    <property type="entry name" value="NTF2-like_dom_sf"/>
</dbReference>
<dbReference type="InterPro" id="IPR004027">
    <property type="entry name" value="SEC_C_motif"/>
</dbReference>
<dbReference type="InterPro" id="IPR023006">
    <property type="entry name" value="UPF0225"/>
</dbReference>
<dbReference type="InterPro" id="IPR048469">
    <property type="entry name" value="YchJ-like_M"/>
</dbReference>
<dbReference type="NCBIfam" id="NF002449">
    <property type="entry name" value="PRK01617.1"/>
    <property type="match status" value="1"/>
</dbReference>
<dbReference type="NCBIfam" id="NF002486">
    <property type="entry name" value="PRK01752.1"/>
    <property type="match status" value="1"/>
</dbReference>
<dbReference type="PANTHER" id="PTHR33747:SF1">
    <property type="entry name" value="ADENYLATE CYCLASE-ASSOCIATED CAP C-TERMINAL DOMAIN-CONTAINING PROTEIN"/>
    <property type="match status" value="1"/>
</dbReference>
<dbReference type="PANTHER" id="PTHR33747">
    <property type="entry name" value="UPF0225 PROTEIN SCO1677"/>
    <property type="match status" value="1"/>
</dbReference>
<dbReference type="Pfam" id="PF02810">
    <property type="entry name" value="SEC-C"/>
    <property type="match status" value="2"/>
</dbReference>
<dbReference type="Pfam" id="PF17775">
    <property type="entry name" value="YchJ_M-like"/>
    <property type="match status" value="1"/>
</dbReference>
<dbReference type="SUPFAM" id="SSF54427">
    <property type="entry name" value="NTF2-like"/>
    <property type="match status" value="1"/>
</dbReference>
<dbReference type="SUPFAM" id="SSF103642">
    <property type="entry name" value="Sec-C motif"/>
    <property type="match status" value="1"/>
</dbReference>
<organism>
    <name type="scientific">Salmonella paratyphi A (strain ATCC 9150 / SARB42)</name>
    <dbReference type="NCBI Taxonomy" id="295319"/>
    <lineage>
        <taxon>Bacteria</taxon>
        <taxon>Pseudomonadati</taxon>
        <taxon>Pseudomonadota</taxon>
        <taxon>Gammaproteobacteria</taxon>
        <taxon>Enterobacterales</taxon>
        <taxon>Enterobacteriaceae</taxon>
        <taxon>Salmonella</taxon>
    </lineage>
</organism>
<reference key="1">
    <citation type="journal article" date="2004" name="Nat. Genet.">
        <title>Comparison of genome degradation in Paratyphi A and Typhi, human-restricted serovars of Salmonella enterica that cause typhoid.</title>
        <authorList>
            <person name="McClelland M."/>
            <person name="Sanderson K.E."/>
            <person name="Clifton S.W."/>
            <person name="Latreille P."/>
            <person name="Porwollik S."/>
            <person name="Sabo A."/>
            <person name="Meyer R."/>
            <person name="Bieri T."/>
            <person name="Ozersky P."/>
            <person name="McLellan M."/>
            <person name="Harkins C.R."/>
            <person name="Wang C."/>
            <person name="Nguyen C."/>
            <person name="Berghoff A."/>
            <person name="Elliott G."/>
            <person name="Kohlberg S."/>
            <person name="Strong C."/>
            <person name="Du F."/>
            <person name="Carter J."/>
            <person name="Kremizki C."/>
            <person name="Layman D."/>
            <person name="Leonard S."/>
            <person name="Sun H."/>
            <person name="Fulton L."/>
            <person name="Nash W."/>
            <person name="Miner T."/>
            <person name="Minx P."/>
            <person name="Delehaunty K."/>
            <person name="Fronick C."/>
            <person name="Magrini V."/>
            <person name="Nhan M."/>
            <person name="Warren W."/>
            <person name="Florea L."/>
            <person name="Spieth J."/>
            <person name="Wilson R.K."/>
        </authorList>
    </citation>
    <scope>NUCLEOTIDE SEQUENCE [LARGE SCALE GENOMIC DNA]</scope>
    <source>
        <strain>ATCC 9150 / SARB42</strain>
    </source>
</reference>
<accession>Q5PI88</accession>
<evidence type="ECO:0000255" key="1">
    <source>
        <dbReference type="HAMAP-Rule" id="MF_00612"/>
    </source>
</evidence>
<sequence>MSQPCPCGSADEYSLCCGRIVSGERVAPDPSHLMRSRYCAFVMKDADYLIKSWHPTCNAAAFRDDIIAGFANTRWLGLTIFEHTWSEAENTGYVSFIARFSEQGKTGAIIERSRFIKENGQWYYIDGTRPQLGRNDPCPCGSGKKFKKCCGQ</sequence>
<feature type="chain" id="PRO_1000056737" description="UPF0225 protein YchJ">
    <location>
        <begin position="1"/>
        <end position="152"/>
    </location>
</feature>
<gene>
    <name evidence="1" type="primary">ychJ</name>
    <name type="ordered locus">SPA1123</name>
</gene>
<proteinExistence type="inferred from homology"/>
<comment type="similarity">
    <text evidence="1">Belongs to the UPF0225 family.</text>
</comment>